<protein>
    <recommendedName>
        <fullName evidence="1">Uridine kinase</fullName>
        <ecNumber evidence="1">2.7.1.48</ecNumber>
    </recommendedName>
    <alternativeName>
        <fullName evidence="1">Cytidine monophosphokinase</fullName>
    </alternativeName>
    <alternativeName>
        <fullName evidence="1">Uridine monophosphokinase</fullName>
    </alternativeName>
</protein>
<gene>
    <name evidence="1" type="primary">udk</name>
    <name type="ordered locus">llmg_0762</name>
</gene>
<feature type="chain" id="PRO_1000017882" description="Uridine kinase">
    <location>
        <begin position="1"/>
        <end position="206"/>
    </location>
</feature>
<feature type="binding site" evidence="1">
    <location>
        <begin position="11"/>
        <end position="18"/>
    </location>
    <ligand>
        <name>ATP</name>
        <dbReference type="ChEBI" id="CHEBI:30616"/>
    </ligand>
</feature>
<reference key="1">
    <citation type="journal article" date="2007" name="J. Bacteriol.">
        <title>The complete genome sequence of the lactic acid bacterial paradigm Lactococcus lactis subsp. cremoris MG1363.</title>
        <authorList>
            <person name="Wegmann U."/>
            <person name="O'Connell-Motherway M."/>
            <person name="Zomer A."/>
            <person name="Buist G."/>
            <person name="Shearman C."/>
            <person name="Canchaya C."/>
            <person name="Ventura M."/>
            <person name="Goesmann A."/>
            <person name="Gasson M.J."/>
            <person name="Kuipers O.P."/>
            <person name="van Sinderen D."/>
            <person name="Kok J."/>
        </authorList>
    </citation>
    <scope>NUCLEOTIDE SEQUENCE [LARGE SCALE GENOMIC DNA]</scope>
    <source>
        <strain>MG1363</strain>
    </source>
</reference>
<sequence>MKKTLIIGVTGGSASGKTSVSHAILETFSNERIAMIEHDSYYKDQSHLTFEERTKTNYDHPLAFDTDYLIAQLKELQYGRAVDIPIYDYAKHTRSQETYRQEPVDVLIVEGILVLEDERLRDLMDIKIFVDTDDDVRIIRRIRRDIEERGRTLDSVITQYLEAVKPMYHQFIEPTKRYADVIIPEGVSNTVGVDIITTKIASILND</sequence>
<comment type="catalytic activity">
    <reaction evidence="1">
        <text>uridine + ATP = UMP + ADP + H(+)</text>
        <dbReference type="Rhea" id="RHEA:16825"/>
        <dbReference type="ChEBI" id="CHEBI:15378"/>
        <dbReference type="ChEBI" id="CHEBI:16704"/>
        <dbReference type="ChEBI" id="CHEBI:30616"/>
        <dbReference type="ChEBI" id="CHEBI:57865"/>
        <dbReference type="ChEBI" id="CHEBI:456216"/>
        <dbReference type="EC" id="2.7.1.48"/>
    </reaction>
</comment>
<comment type="catalytic activity">
    <reaction evidence="1">
        <text>cytidine + ATP = CMP + ADP + H(+)</text>
        <dbReference type="Rhea" id="RHEA:24674"/>
        <dbReference type="ChEBI" id="CHEBI:15378"/>
        <dbReference type="ChEBI" id="CHEBI:17562"/>
        <dbReference type="ChEBI" id="CHEBI:30616"/>
        <dbReference type="ChEBI" id="CHEBI:60377"/>
        <dbReference type="ChEBI" id="CHEBI:456216"/>
        <dbReference type="EC" id="2.7.1.48"/>
    </reaction>
</comment>
<comment type="pathway">
    <text evidence="1">Pyrimidine metabolism; CTP biosynthesis via salvage pathway; CTP from cytidine: step 1/3.</text>
</comment>
<comment type="pathway">
    <text evidence="1">Pyrimidine metabolism; UMP biosynthesis via salvage pathway; UMP from uridine: step 1/1.</text>
</comment>
<comment type="subcellular location">
    <subcellularLocation>
        <location evidence="1">Cytoplasm</location>
    </subcellularLocation>
</comment>
<comment type="similarity">
    <text evidence="1">Belongs to the uridine kinase family.</text>
</comment>
<organism>
    <name type="scientific">Lactococcus lactis subsp. cremoris (strain MG1363)</name>
    <dbReference type="NCBI Taxonomy" id="416870"/>
    <lineage>
        <taxon>Bacteria</taxon>
        <taxon>Bacillati</taxon>
        <taxon>Bacillota</taxon>
        <taxon>Bacilli</taxon>
        <taxon>Lactobacillales</taxon>
        <taxon>Streptococcaceae</taxon>
        <taxon>Lactococcus</taxon>
        <taxon>Lactococcus cremoris subsp. cremoris</taxon>
    </lineage>
</organism>
<evidence type="ECO:0000255" key="1">
    <source>
        <dbReference type="HAMAP-Rule" id="MF_00551"/>
    </source>
</evidence>
<proteinExistence type="inferred from homology"/>
<accession>A2RJB4</accession>
<dbReference type="EC" id="2.7.1.48" evidence="1"/>
<dbReference type="EMBL" id="AM406671">
    <property type="protein sequence ID" value="CAL97366.1"/>
    <property type="molecule type" value="Genomic_DNA"/>
</dbReference>
<dbReference type="RefSeq" id="WP_011676564.1">
    <property type="nucleotide sequence ID" value="NC_009004.1"/>
</dbReference>
<dbReference type="SMR" id="A2RJB4"/>
<dbReference type="STRING" id="416870.llmg_0762"/>
<dbReference type="GeneID" id="61109910"/>
<dbReference type="KEGG" id="llm:llmg_0762"/>
<dbReference type="eggNOG" id="COG0572">
    <property type="taxonomic scope" value="Bacteria"/>
</dbReference>
<dbReference type="HOGENOM" id="CLU_021278_1_2_9"/>
<dbReference type="OrthoDB" id="9777642at2"/>
<dbReference type="PhylomeDB" id="A2RJB4"/>
<dbReference type="UniPathway" id="UPA00574">
    <property type="reaction ID" value="UER00637"/>
</dbReference>
<dbReference type="UniPathway" id="UPA00579">
    <property type="reaction ID" value="UER00640"/>
</dbReference>
<dbReference type="Proteomes" id="UP000000364">
    <property type="component" value="Chromosome"/>
</dbReference>
<dbReference type="GO" id="GO:0005737">
    <property type="term" value="C:cytoplasm"/>
    <property type="evidence" value="ECO:0007669"/>
    <property type="project" value="UniProtKB-SubCell"/>
</dbReference>
<dbReference type="GO" id="GO:0005524">
    <property type="term" value="F:ATP binding"/>
    <property type="evidence" value="ECO:0007669"/>
    <property type="project" value="UniProtKB-UniRule"/>
</dbReference>
<dbReference type="GO" id="GO:0043771">
    <property type="term" value="F:cytidine kinase activity"/>
    <property type="evidence" value="ECO:0007669"/>
    <property type="project" value="RHEA"/>
</dbReference>
<dbReference type="GO" id="GO:0004849">
    <property type="term" value="F:uridine kinase activity"/>
    <property type="evidence" value="ECO:0007669"/>
    <property type="project" value="UniProtKB-UniRule"/>
</dbReference>
<dbReference type="GO" id="GO:0044211">
    <property type="term" value="P:CTP salvage"/>
    <property type="evidence" value="ECO:0007669"/>
    <property type="project" value="UniProtKB-UniRule"/>
</dbReference>
<dbReference type="GO" id="GO:0044206">
    <property type="term" value="P:UMP salvage"/>
    <property type="evidence" value="ECO:0007669"/>
    <property type="project" value="UniProtKB-UniRule"/>
</dbReference>
<dbReference type="CDD" id="cd02023">
    <property type="entry name" value="UMPK"/>
    <property type="match status" value="1"/>
</dbReference>
<dbReference type="Gene3D" id="3.40.50.300">
    <property type="entry name" value="P-loop containing nucleotide triphosphate hydrolases"/>
    <property type="match status" value="1"/>
</dbReference>
<dbReference type="HAMAP" id="MF_00551">
    <property type="entry name" value="Uridine_kinase"/>
    <property type="match status" value="1"/>
</dbReference>
<dbReference type="InterPro" id="IPR027417">
    <property type="entry name" value="P-loop_NTPase"/>
</dbReference>
<dbReference type="InterPro" id="IPR006083">
    <property type="entry name" value="PRK/URK"/>
</dbReference>
<dbReference type="InterPro" id="IPR026008">
    <property type="entry name" value="Uridine_kinase"/>
</dbReference>
<dbReference type="InterPro" id="IPR000764">
    <property type="entry name" value="Uridine_kinase-like"/>
</dbReference>
<dbReference type="NCBIfam" id="NF004018">
    <property type="entry name" value="PRK05480.1"/>
    <property type="match status" value="1"/>
</dbReference>
<dbReference type="NCBIfam" id="TIGR00235">
    <property type="entry name" value="udk"/>
    <property type="match status" value="1"/>
</dbReference>
<dbReference type="PANTHER" id="PTHR10285">
    <property type="entry name" value="URIDINE KINASE"/>
    <property type="match status" value="1"/>
</dbReference>
<dbReference type="Pfam" id="PF00485">
    <property type="entry name" value="PRK"/>
    <property type="match status" value="1"/>
</dbReference>
<dbReference type="PRINTS" id="PR00988">
    <property type="entry name" value="URIDINKINASE"/>
</dbReference>
<dbReference type="SUPFAM" id="SSF52540">
    <property type="entry name" value="P-loop containing nucleoside triphosphate hydrolases"/>
    <property type="match status" value="1"/>
</dbReference>
<keyword id="KW-0067">ATP-binding</keyword>
<keyword id="KW-0963">Cytoplasm</keyword>
<keyword id="KW-0418">Kinase</keyword>
<keyword id="KW-0547">Nucleotide-binding</keyword>
<keyword id="KW-0808">Transferase</keyword>
<name>URK_LACLM</name>